<gene>
    <name evidence="1" type="primary">UTR4</name>
    <name type="ordered locus">CAALFM_C201860CA</name>
    <name type="ORF">CaO19.1495</name>
    <name type="ORF">CaO19.9072</name>
</gene>
<evidence type="ECO:0000255" key="1">
    <source>
        <dbReference type="HAMAP-Rule" id="MF_03117"/>
    </source>
</evidence>
<feature type="chain" id="PRO_0000393993" description="Enolase-phosphatase E1">
    <location>
        <begin position="1"/>
        <end position="265"/>
    </location>
</feature>
<feature type="binding site" evidence="1">
    <location>
        <position position="18"/>
    </location>
    <ligand>
        <name>Mg(2+)</name>
        <dbReference type="ChEBI" id="CHEBI:18420"/>
    </ligand>
</feature>
<feature type="binding site" evidence="1">
    <location>
        <position position="20"/>
    </location>
    <ligand>
        <name>Mg(2+)</name>
        <dbReference type="ChEBI" id="CHEBI:18420"/>
    </ligand>
</feature>
<feature type="binding site" evidence="1">
    <location>
        <begin position="144"/>
        <end position="145"/>
    </location>
    <ligand>
        <name>substrate</name>
    </ligand>
</feature>
<feature type="binding site" evidence="1">
    <location>
        <position position="188"/>
    </location>
    <ligand>
        <name>substrate</name>
    </ligand>
</feature>
<feature type="binding site" evidence="1">
    <location>
        <position position="215"/>
    </location>
    <ligand>
        <name>Mg(2+)</name>
        <dbReference type="ChEBI" id="CHEBI:18420"/>
    </ligand>
</feature>
<name>ENOPH_CANAL</name>
<reference key="1">
    <citation type="journal article" date="2004" name="Proc. Natl. Acad. Sci. U.S.A.">
        <title>The diploid genome sequence of Candida albicans.</title>
        <authorList>
            <person name="Jones T."/>
            <person name="Federspiel N.A."/>
            <person name="Chibana H."/>
            <person name="Dungan J."/>
            <person name="Kalman S."/>
            <person name="Magee B.B."/>
            <person name="Newport G."/>
            <person name="Thorstenson Y.R."/>
            <person name="Agabian N."/>
            <person name="Magee P.T."/>
            <person name="Davis R.W."/>
            <person name="Scherer S."/>
        </authorList>
    </citation>
    <scope>NUCLEOTIDE SEQUENCE [LARGE SCALE GENOMIC DNA]</scope>
    <source>
        <strain>SC5314 / ATCC MYA-2876</strain>
    </source>
</reference>
<reference key="2">
    <citation type="journal article" date="2007" name="Genome Biol.">
        <title>Assembly of the Candida albicans genome into sixteen supercontigs aligned on the eight chromosomes.</title>
        <authorList>
            <person name="van het Hoog M."/>
            <person name="Rast T.J."/>
            <person name="Martchenko M."/>
            <person name="Grindle S."/>
            <person name="Dignard D."/>
            <person name="Hogues H."/>
            <person name="Cuomo C."/>
            <person name="Berriman M."/>
            <person name="Scherer S."/>
            <person name="Magee B.B."/>
            <person name="Whiteway M."/>
            <person name="Chibana H."/>
            <person name="Nantel A."/>
            <person name="Magee P.T."/>
        </authorList>
    </citation>
    <scope>GENOME REANNOTATION</scope>
    <source>
        <strain>SC5314 / ATCC MYA-2876</strain>
    </source>
</reference>
<reference key="3">
    <citation type="journal article" date="2013" name="Genome Biol.">
        <title>Assembly of a phased diploid Candida albicans genome facilitates allele-specific measurements and provides a simple model for repeat and indel structure.</title>
        <authorList>
            <person name="Muzzey D."/>
            <person name="Schwartz K."/>
            <person name="Weissman J.S."/>
            <person name="Sherlock G."/>
        </authorList>
    </citation>
    <scope>NUCLEOTIDE SEQUENCE [LARGE SCALE GENOMIC DNA]</scope>
    <scope>GENOME REANNOTATION</scope>
    <source>
        <strain>SC5314 / ATCC MYA-2876</strain>
    </source>
</reference>
<sequence>MTTTAKTDDIPIDTVILDIEGTVCPITFVKDTLFPYFIEKLPSILDKFQYPLSNTSASSDDQVLNILKQLPDNITKSSESIYKHFKNLVDQDIKDPILKSLQGLIWKQGYEKNELQAPIYQDSIEFIESFPTKSSTNNKIYIYSSGSIKAQILLFGHVKSTTTTITNEVIDLNPKLNGYFDITTAGFKNQSNSYKKILQEINKSSTPKSVLFLSDNINEVNAAIEAGMKSYIVIRPGNPPIDDDDDGNDDKINHKIIYSLDELDL</sequence>
<comment type="function">
    <text evidence="1">Bifunctional enzyme that catalyzes the enolization of 2,3-diketo-5-methylthiopentyl-1-phosphate (DK-MTP-1-P) into the intermediate 2-hydroxy-3-keto-5-methylthiopentenyl-1-phosphate (HK-MTPenyl-1-P), which is then dephosphorylated to form the acireductone 1,2-dihydroxy-3-keto-5-methylthiopentene (DHK-MTPene).</text>
</comment>
<comment type="catalytic activity">
    <reaction evidence="1">
        <text>5-methylsulfanyl-2,3-dioxopentyl phosphate + H2O = 1,2-dihydroxy-5-(methylsulfanyl)pent-1-en-3-one + phosphate</text>
        <dbReference type="Rhea" id="RHEA:21700"/>
        <dbReference type="ChEBI" id="CHEBI:15377"/>
        <dbReference type="ChEBI" id="CHEBI:43474"/>
        <dbReference type="ChEBI" id="CHEBI:49252"/>
        <dbReference type="ChEBI" id="CHEBI:58828"/>
        <dbReference type="EC" id="3.1.3.77"/>
    </reaction>
</comment>
<comment type="cofactor">
    <cofactor evidence="1">
        <name>Mg(2+)</name>
        <dbReference type="ChEBI" id="CHEBI:18420"/>
    </cofactor>
    <text evidence="1">Binds 1 Mg(2+) ion per subunit.</text>
</comment>
<comment type="pathway">
    <text evidence="1">Amino-acid biosynthesis; L-methionine biosynthesis via salvage pathway; L-methionine from S-methyl-5-thio-alpha-D-ribose 1-phosphate: step 3/6.</text>
</comment>
<comment type="pathway">
    <text evidence="1">Amino-acid biosynthesis; L-methionine biosynthesis via salvage pathway; L-methionine from S-methyl-5-thio-alpha-D-ribose 1-phosphate: step 4/6.</text>
</comment>
<comment type="subunit">
    <text evidence="1">Monomer.</text>
</comment>
<comment type="subcellular location">
    <subcellularLocation>
        <location evidence="1">Cytoplasm</location>
    </subcellularLocation>
    <subcellularLocation>
        <location evidence="1">Nucleus</location>
    </subcellularLocation>
</comment>
<comment type="similarity">
    <text evidence="1">Belongs to the HAD-like hydrolase superfamily. MasA/MtnC family.</text>
</comment>
<organism>
    <name type="scientific">Candida albicans (strain SC5314 / ATCC MYA-2876)</name>
    <name type="common">Yeast</name>
    <dbReference type="NCBI Taxonomy" id="237561"/>
    <lineage>
        <taxon>Eukaryota</taxon>
        <taxon>Fungi</taxon>
        <taxon>Dikarya</taxon>
        <taxon>Ascomycota</taxon>
        <taxon>Saccharomycotina</taxon>
        <taxon>Pichiomycetes</taxon>
        <taxon>Debaryomycetaceae</taxon>
        <taxon>Candida/Lodderomyces clade</taxon>
        <taxon>Candida</taxon>
    </lineage>
</organism>
<dbReference type="EC" id="3.1.3.77" evidence="1"/>
<dbReference type="EMBL" id="CP017624">
    <property type="protein sequence ID" value="AOW27229.1"/>
    <property type="molecule type" value="Genomic_DNA"/>
</dbReference>
<dbReference type="RefSeq" id="XP_722543.1">
    <property type="nucleotide sequence ID" value="XM_717450.1"/>
</dbReference>
<dbReference type="SMR" id="Q5AM80"/>
<dbReference type="FunCoup" id="Q5AM80">
    <property type="interactions" value="671"/>
</dbReference>
<dbReference type="STRING" id="237561.Q5AM80"/>
<dbReference type="EnsemblFungi" id="C2_01860C_A-T">
    <property type="protein sequence ID" value="C2_01860C_A-T-p1"/>
    <property type="gene ID" value="C2_01860C_A"/>
</dbReference>
<dbReference type="GeneID" id="3635835"/>
<dbReference type="KEGG" id="cal:CAALFM_C201860CA"/>
<dbReference type="CGD" id="CAL0000179480">
    <property type="gene designation" value="orf19.9072"/>
</dbReference>
<dbReference type="VEuPathDB" id="FungiDB:C2_01860C_A"/>
<dbReference type="eggNOG" id="KOG2630">
    <property type="taxonomic scope" value="Eukaryota"/>
</dbReference>
<dbReference type="HOGENOM" id="CLU_023273_1_1_1"/>
<dbReference type="InParanoid" id="Q5AM80"/>
<dbReference type="OrthoDB" id="272500at2759"/>
<dbReference type="UniPathway" id="UPA00904">
    <property type="reaction ID" value="UER00876"/>
</dbReference>
<dbReference type="UniPathway" id="UPA00904">
    <property type="reaction ID" value="UER00877"/>
</dbReference>
<dbReference type="PRO" id="PR:Q5AM80"/>
<dbReference type="Proteomes" id="UP000000559">
    <property type="component" value="Chromosome 2"/>
</dbReference>
<dbReference type="GO" id="GO:0005737">
    <property type="term" value="C:cytoplasm"/>
    <property type="evidence" value="ECO:0007669"/>
    <property type="project" value="UniProtKB-SubCell"/>
</dbReference>
<dbReference type="GO" id="GO:0005634">
    <property type="term" value="C:nucleus"/>
    <property type="evidence" value="ECO:0007669"/>
    <property type="project" value="UniProtKB-SubCell"/>
</dbReference>
<dbReference type="GO" id="GO:0043874">
    <property type="term" value="F:acireductone synthase activity"/>
    <property type="evidence" value="ECO:0000318"/>
    <property type="project" value="GO_Central"/>
</dbReference>
<dbReference type="GO" id="GO:0000287">
    <property type="term" value="F:magnesium ion binding"/>
    <property type="evidence" value="ECO:0007669"/>
    <property type="project" value="UniProtKB-UniRule"/>
</dbReference>
<dbReference type="GO" id="GO:0019509">
    <property type="term" value="P:L-methionine salvage from methylthioadenosine"/>
    <property type="evidence" value="ECO:0000318"/>
    <property type="project" value="GO_Central"/>
</dbReference>
<dbReference type="Gene3D" id="1.10.720.60">
    <property type="match status" value="1"/>
</dbReference>
<dbReference type="Gene3D" id="3.40.50.1000">
    <property type="entry name" value="HAD superfamily/HAD-like"/>
    <property type="match status" value="1"/>
</dbReference>
<dbReference type="HAMAP" id="MF_03117">
    <property type="entry name" value="Salvage_MtnC_euk"/>
    <property type="match status" value="1"/>
</dbReference>
<dbReference type="InterPro" id="IPR023943">
    <property type="entry name" value="Enolase-ppase_E1"/>
</dbReference>
<dbReference type="InterPro" id="IPR027511">
    <property type="entry name" value="ENOPH1_eukaryotes"/>
</dbReference>
<dbReference type="InterPro" id="IPR036412">
    <property type="entry name" value="HAD-like_sf"/>
</dbReference>
<dbReference type="InterPro" id="IPR023214">
    <property type="entry name" value="HAD_sf"/>
</dbReference>
<dbReference type="NCBIfam" id="TIGR01691">
    <property type="entry name" value="enolase-ppase"/>
    <property type="match status" value="1"/>
</dbReference>
<dbReference type="PANTHER" id="PTHR20371">
    <property type="entry name" value="ENOLASE-PHOSPHATASE E1"/>
    <property type="match status" value="1"/>
</dbReference>
<dbReference type="PANTHER" id="PTHR20371:SF1">
    <property type="entry name" value="ENOLASE-PHOSPHATASE E1"/>
    <property type="match status" value="1"/>
</dbReference>
<dbReference type="Pfam" id="PF00702">
    <property type="entry name" value="Hydrolase"/>
    <property type="match status" value="1"/>
</dbReference>
<dbReference type="SFLD" id="SFLDG01133">
    <property type="entry name" value="C1.5.4:_Enolase-phosphatase_Li"/>
    <property type="match status" value="1"/>
</dbReference>
<dbReference type="SFLD" id="SFLDS00003">
    <property type="entry name" value="Haloacid_Dehalogenase"/>
    <property type="match status" value="1"/>
</dbReference>
<dbReference type="SUPFAM" id="SSF56784">
    <property type="entry name" value="HAD-like"/>
    <property type="match status" value="1"/>
</dbReference>
<proteinExistence type="inferred from homology"/>
<accession>Q5AM80</accession>
<accession>A0A1D8PGF6</accession>
<accession>Q5ALS9</accession>
<protein>
    <recommendedName>
        <fullName evidence="1">Enolase-phosphatase E1</fullName>
        <ecNumber evidence="1">3.1.3.77</ecNumber>
    </recommendedName>
    <alternativeName>
        <fullName evidence="1">2,3-diketo-5-methylthio-1-phosphopentane phosphatase</fullName>
    </alternativeName>
</protein>
<keyword id="KW-0028">Amino-acid biosynthesis</keyword>
<keyword id="KW-0963">Cytoplasm</keyword>
<keyword id="KW-0378">Hydrolase</keyword>
<keyword id="KW-0460">Magnesium</keyword>
<keyword id="KW-0479">Metal-binding</keyword>
<keyword id="KW-0486">Methionine biosynthesis</keyword>
<keyword id="KW-0539">Nucleus</keyword>
<keyword id="KW-1185">Reference proteome</keyword>